<sequence length="265" mass="28235">MSQASSTDTPFVIAGRTYGSRLLVGTGKYKDLDETRRAIEASGAEIVTVAVRRTNIGQNPDEPNLLDVIPPDRYTILPNTAGCYDAVEAVRTCRLARELLDGHNLVKLEVLADQKTLFPNVVETLKAAEQLVKDGFDVMVYTSDDPIIARQLAEIGCIAVMPLAGLIGSGLGICNPYNLRIILEEAKVPVLVDAGVGTASDAAIAMELGCEAVLMNTAIAHAKDPVMMAEAMKHAIVAGRLAYLAGRMPRKLYASASSPLDGLID</sequence>
<protein>
    <recommendedName>
        <fullName evidence="1">Thiazole synthase</fullName>
        <ecNumber evidence="1">2.8.1.10</ecNumber>
    </recommendedName>
</protein>
<proteinExistence type="inferred from homology"/>
<feature type="chain" id="PRO_1000026027" description="Thiazole synthase">
    <location>
        <begin position="1"/>
        <end position="265"/>
    </location>
</feature>
<feature type="active site" description="Schiff-base intermediate with DXP" evidence="1">
    <location>
        <position position="107"/>
    </location>
</feature>
<feature type="binding site" evidence="1">
    <location>
        <position position="168"/>
    </location>
    <ligand>
        <name>1-deoxy-D-xylulose 5-phosphate</name>
        <dbReference type="ChEBI" id="CHEBI:57792"/>
    </ligand>
</feature>
<feature type="binding site" evidence="1">
    <location>
        <begin position="194"/>
        <end position="195"/>
    </location>
    <ligand>
        <name>1-deoxy-D-xylulose 5-phosphate</name>
        <dbReference type="ChEBI" id="CHEBI:57792"/>
    </ligand>
</feature>
<feature type="binding site" evidence="1">
    <location>
        <begin position="216"/>
        <end position="217"/>
    </location>
    <ligand>
        <name>1-deoxy-D-xylulose 5-phosphate</name>
        <dbReference type="ChEBI" id="CHEBI:57792"/>
    </ligand>
</feature>
<accession>Q02U32</accession>
<keyword id="KW-0963">Cytoplasm</keyword>
<keyword id="KW-0704">Schiff base</keyword>
<keyword id="KW-0784">Thiamine biosynthesis</keyword>
<keyword id="KW-0808">Transferase</keyword>
<evidence type="ECO:0000255" key="1">
    <source>
        <dbReference type="HAMAP-Rule" id="MF_00443"/>
    </source>
</evidence>
<gene>
    <name evidence="1" type="primary">thiG</name>
    <name type="ordered locus">PA14_04980</name>
</gene>
<name>THIG_PSEAB</name>
<comment type="function">
    <text evidence="1">Catalyzes the rearrangement of 1-deoxy-D-xylulose 5-phosphate (DXP) to produce the thiazole phosphate moiety of thiamine. Sulfur is provided by the thiocarboxylate moiety of the carrier protein ThiS. In vitro, sulfur can be provided by H(2)S.</text>
</comment>
<comment type="catalytic activity">
    <reaction evidence="1">
        <text>[ThiS sulfur-carrier protein]-C-terminal-Gly-aminoethanethioate + 2-iminoacetate + 1-deoxy-D-xylulose 5-phosphate = [ThiS sulfur-carrier protein]-C-terminal Gly-Gly + 2-[(2R,5Z)-2-carboxy-4-methylthiazol-5(2H)-ylidene]ethyl phosphate + 2 H2O + H(+)</text>
        <dbReference type="Rhea" id="RHEA:26297"/>
        <dbReference type="Rhea" id="RHEA-COMP:12909"/>
        <dbReference type="Rhea" id="RHEA-COMP:19908"/>
        <dbReference type="ChEBI" id="CHEBI:15377"/>
        <dbReference type="ChEBI" id="CHEBI:15378"/>
        <dbReference type="ChEBI" id="CHEBI:57792"/>
        <dbReference type="ChEBI" id="CHEBI:62899"/>
        <dbReference type="ChEBI" id="CHEBI:77846"/>
        <dbReference type="ChEBI" id="CHEBI:90778"/>
        <dbReference type="ChEBI" id="CHEBI:232372"/>
        <dbReference type="EC" id="2.8.1.10"/>
    </reaction>
</comment>
<comment type="pathway">
    <text evidence="1">Cofactor biosynthesis; thiamine diphosphate biosynthesis.</text>
</comment>
<comment type="subunit">
    <text evidence="1">Homotetramer. Forms heterodimers with either ThiH or ThiS.</text>
</comment>
<comment type="subcellular location">
    <subcellularLocation>
        <location evidence="1">Cytoplasm</location>
    </subcellularLocation>
</comment>
<comment type="similarity">
    <text evidence="1">Belongs to the ThiG family.</text>
</comment>
<organism>
    <name type="scientific">Pseudomonas aeruginosa (strain UCBPP-PA14)</name>
    <dbReference type="NCBI Taxonomy" id="208963"/>
    <lineage>
        <taxon>Bacteria</taxon>
        <taxon>Pseudomonadati</taxon>
        <taxon>Pseudomonadota</taxon>
        <taxon>Gammaproteobacteria</taxon>
        <taxon>Pseudomonadales</taxon>
        <taxon>Pseudomonadaceae</taxon>
        <taxon>Pseudomonas</taxon>
    </lineage>
</organism>
<dbReference type="EC" id="2.8.1.10" evidence="1"/>
<dbReference type="EMBL" id="CP000438">
    <property type="protein sequence ID" value="ABJ15347.1"/>
    <property type="molecule type" value="Genomic_DNA"/>
</dbReference>
<dbReference type="RefSeq" id="WP_003084517.1">
    <property type="nucleotide sequence ID" value="NZ_CP034244.1"/>
</dbReference>
<dbReference type="SMR" id="Q02U32"/>
<dbReference type="KEGG" id="pau:PA14_04980"/>
<dbReference type="PseudoCAP" id="PA14_04980"/>
<dbReference type="HOGENOM" id="CLU_062233_1_1_6"/>
<dbReference type="BioCyc" id="PAER208963:G1G74-415-MONOMER"/>
<dbReference type="UniPathway" id="UPA00060"/>
<dbReference type="Proteomes" id="UP000000653">
    <property type="component" value="Chromosome"/>
</dbReference>
<dbReference type="GO" id="GO:0005737">
    <property type="term" value="C:cytoplasm"/>
    <property type="evidence" value="ECO:0007669"/>
    <property type="project" value="UniProtKB-SubCell"/>
</dbReference>
<dbReference type="GO" id="GO:1990107">
    <property type="term" value="F:thiazole synthase activity"/>
    <property type="evidence" value="ECO:0007669"/>
    <property type="project" value="UniProtKB-EC"/>
</dbReference>
<dbReference type="GO" id="GO:0009229">
    <property type="term" value="P:thiamine diphosphate biosynthetic process"/>
    <property type="evidence" value="ECO:0007669"/>
    <property type="project" value="UniProtKB-UniRule"/>
</dbReference>
<dbReference type="CDD" id="cd04728">
    <property type="entry name" value="ThiG"/>
    <property type="match status" value="1"/>
</dbReference>
<dbReference type="Gene3D" id="3.20.20.70">
    <property type="entry name" value="Aldolase class I"/>
    <property type="match status" value="1"/>
</dbReference>
<dbReference type="HAMAP" id="MF_00443">
    <property type="entry name" value="ThiG"/>
    <property type="match status" value="1"/>
</dbReference>
<dbReference type="InterPro" id="IPR013785">
    <property type="entry name" value="Aldolase_TIM"/>
</dbReference>
<dbReference type="InterPro" id="IPR033983">
    <property type="entry name" value="Thiazole_synthase_ThiG"/>
</dbReference>
<dbReference type="InterPro" id="IPR008867">
    <property type="entry name" value="ThiG"/>
</dbReference>
<dbReference type="PANTHER" id="PTHR34266">
    <property type="entry name" value="THIAZOLE SYNTHASE"/>
    <property type="match status" value="1"/>
</dbReference>
<dbReference type="PANTHER" id="PTHR34266:SF2">
    <property type="entry name" value="THIAZOLE SYNTHASE"/>
    <property type="match status" value="1"/>
</dbReference>
<dbReference type="Pfam" id="PF05690">
    <property type="entry name" value="ThiG"/>
    <property type="match status" value="1"/>
</dbReference>
<dbReference type="SUPFAM" id="SSF110399">
    <property type="entry name" value="ThiG-like"/>
    <property type="match status" value="1"/>
</dbReference>
<reference key="1">
    <citation type="journal article" date="2006" name="Genome Biol.">
        <title>Genomic analysis reveals that Pseudomonas aeruginosa virulence is combinatorial.</title>
        <authorList>
            <person name="Lee D.G."/>
            <person name="Urbach J.M."/>
            <person name="Wu G."/>
            <person name="Liberati N.T."/>
            <person name="Feinbaum R.L."/>
            <person name="Miyata S."/>
            <person name="Diggins L.T."/>
            <person name="He J."/>
            <person name="Saucier M."/>
            <person name="Deziel E."/>
            <person name="Friedman L."/>
            <person name="Li L."/>
            <person name="Grills G."/>
            <person name="Montgomery K."/>
            <person name="Kucherlapati R."/>
            <person name="Rahme L.G."/>
            <person name="Ausubel F.M."/>
        </authorList>
    </citation>
    <scope>NUCLEOTIDE SEQUENCE [LARGE SCALE GENOMIC DNA]</scope>
    <source>
        <strain>UCBPP-PA14</strain>
    </source>
</reference>